<dbReference type="EMBL" id="CP000446">
    <property type="protein sequence ID" value="ABI40227.1"/>
    <property type="molecule type" value="Genomic_DNA"/>
</dbReference>
<dbReference type="RefSeq" id="WP_011623899.1">
    <property type="nucleotide sequence ID" value="NC_008321.1"/>
</dbReference>
<dbReference type="SMR" id="Q0HFE0"/>
<dbReference type="KEGG" id="she:Shewmr4_3156"/>
<dbReference type="HOGENOM" id="CLU_099839_1_0_6"/>
<dbReference type="GO" id="GO:0005829">
    <property type="term" value="C:cytosol"/>
    <property type="evidence" value="ECO:0007669"/>
    <property type="project" value="TreeGrafter"/>
</dbReference>
<dbReference type="GO" id="GO:0000166">
    <property type="term" value="F:nucleotide binding"/>
    <property type="evidence" value="ECO:0007669"/>
    <property type="project" value="TreeGrafter"/>
</dbReference>
<dbReference type="CDD" id="cd11740">
    <property type="entry name" value="YajQ_like"/>
    <property type="match status" value="1"/>
</dbReference>
<dbReference type="FunFam" id="3.30.70.860:FF:000001">
    <property type="entry name" value="UPF0234 protein YajQ"/>
    <property type="match status" value="1"/>
</dbReference>
<dbReference type="FunFam" id="3.30.70.990:FF:000001">
    <property type="entry name" value="UPF0234 protein YajQ"/>
    <property type="match status" value="1"/>
</dbReference>
<dbReference type="Gene3D" id="3.30.70.860">
    <property type="match status" value="1"/>
</dbReference>
<dbReference type="Gene3D" id="3.30.70.990">
    <property type="entry name" value="YajQ-like, domain 2"/>
    <property type="match status" value="1"/>
</dbReference>
<dbReference type="HAMAP" id="MF_00632">
    <property type="entry name" value="YajQ"/>
    <property type="match status" value="1"/>
</dbReference>
<dbReference type="InterPro" id="IPR007551">
    <property type="entry name" value="DUF520"/>
</dbReference>
<dbReference type="InterPro" id="IPR035571">
    <property type="entry name" value="UPF0234-like_C"/>
</dbReference>
<dbReference type="InterPro" id="IPR035570">
    <property type="entry name" value="UPF0234_N"/>
</dbReference>
<dbReference type="InterPro" id="IPR036183">
    <property type="entry name" value="YajQ-like_sf"/>
</dbReference>
<dbReference type="NCBIfam" id="NF003819">
    <property type="entry name" value="PRK05412.1"/>
    <property type="match status" value="1"/>
</dbReference>
<dbReference type="PANTHER" id="PTHR30476">
    <property type="entry name" value="UPF0234 PROTEIN YAJQ"/>
    <property type="match status" value="1"/>
</dbReference>
<dbReference type="PANTHER" id="PTHR30476:SF0">
    <property type="entry name" value="UPF0234 PROTEIN YAJQ"/>
    <property type="match status" value="1"/>
</dbReference>
<dbReference type="Pfam" id="PF04461">
    <property type="entry name" value="DUF520"/>
    <property type="match status" value="1"/>
</dbReference>
<dbReference type="SUPFAM" id="SSF89963">
    <property type="entry name" value="YajQ-like"/>
    <property type="match status" value="2"/>
</dbReference>
<evidence type="ECO:0000255" key="1">
    <source>
        <dbReference type="HAMAP-Rule" id="MF_00632"/>
    </source>
</evidence>
<accession>Q0HFE0</accession>
<feature type="chain" id="PRO_0000261974" description="Nucleotide-binding protein Shewmr4_3156">
    <location>
        <begin position="1"/>
        <end position="161"/>
    </location>
</feature>
<comment type="function">
    <text evidence="1">Nucleotide-binding protein.</text>
</comment>
<comment type="similarity">
    <text evidence="1">Belongs to the YajQ family.</text>
</comment>
<reference key="1">
    <citation type="submission" date="2006-08" db="EMBL/GenBank/DDBJ databases">
        <title>Complete sequence of Shewanella sp. MR-4.</title>
        <authorList>
            <consortium name="US DOE Joint Genome Institute"/>
            <person name="Copeland A."/>
            <person name="Lucas S."/>
            <person name="Lapidus A."/>
            <person name="Barry K."/>
            <person name="Detter J.C."/>
            <person name="Glavina del Rio T."/>
            <person name="Hammon N."/>
            <person name="Israni S."/>
            <person name="Dalin E."/>
            <person name="Tice H."/>
            <person name="Pitluck S."/>
            <person name="Kiss H."/>
            <person name="Brettin T."/>
            <person name="Bruce D."/>
            <person name="Han C."/>
            <person name="Tapia R."/>
            <person name="Gilna P."/>
            <person name="Schmutz J."/>
            <person name="Larimer F."/>
            <person name="Land M."/>
            <person name="Hauser L."/>
            <person name="Kyrpides N."/>
            <person name="Mikhailova N."/>
            <person name="Nealson K."/>
            <person name="Konstantinidis K."/>
            <person name="Klappenbach J."/>
            <person name="Tiedje J."/>
            <person name="Richardson P."/>
        </authorList>
    </citation>
    <scope>NUCLEOTIDE SEQUENCE [LARGE SCALE GENOMIC DNA]</scope>
    <source>
        <strain>MR-4</strain>
    </source>
</reference>
<sequence length="161" mass="18397">MPSFDIVSEVDEVELRNAVENSRRELSSRFDFRGKDASIEYKDHVVTLTAEDDFQCKQLVDILRTQLSKRNVEPSTMDVDEKSVHSGKTFSLKVRFKQGIETDIAKKIVKMVKDSKIKVQSQIQGDTVRVTGKARDDLQAVMALVRQADLGQPFQFNNFRD</sequence>
<proteinExistence type="inferred from homology"/>
<organism>
    <name type="scientific">Shewanella sp. (strain MR-4)</name>
    <dbReference type="NCBI Taxonomy" id="60480"/>
    <lineage>
        <taxon>Bacteria</taxon>
        <taxon>Pseudomonadati</taxon>
        <taxon>Pseudomonadota</taxon>
        <taxon>Gammaproteobacteria</taxon>
        <taxon>Alteromonadales</taxon>
        <taxon>Shewanellaceae</taxon>
        <taxon>Shewanella</taxon>
    </lineage>
</organism>
<protein>
    <recommendedName>
        <fullName evidence="1">Nucleotide-binding protein Shewmr4_3156</fullName>
    </recommendedName>
</protein>
<keyword id="KW-0547">Nucleotide-binding</keyword>
<name>Y3156_SHESM</name>
<gene>
    <name type="ordered locus">Shewmr4_3156</name>
</gene>